<comment type="function">
    <text evidence="1">The UvrABC repair system catalyzes the recognition and processing of DNA lesions. UvrC both incises the 5' and 3' sides of the lesion. The N-terminal half is responsible for the 3' incision and the C-terminal half is responsible for the 5' incision.</text>
</comment>
<comment type="subunit">
    <text evidence="1">Interacts with UvrB in an incision complex.</text>
</comment>
<comment type="subcellular location">
    <subcellularLocation>
        <location evidence="1">Cytoplasm</location>
    </subcellularLocation>
</comment>
<comment type="similarity">
    <text evidence="1">Belongs to the UvrC family.</text>
</comment>
<keyword id="KW-0963">Cytoplasm</keyword>
<keyword id="KW-0227">DNA damage</keyword>
<keyword id="KW-0228">DNA excision</keyword>
<keyword id="KW-0234">DNA repair</keyword>
<keyword id="KW-0267">Excision nuclease</keyword>
<keyword id="KW-1185">Reference proteome</keyword>
<keyword id="KW-0742">SOS response</keyword>
<name>UVRC_LIGS1</name>
<proteinExistence type="inferred from homology"/>
<dbReference type="EMBL" id="CP000233">
    <property type="protein sequence ID" value="ABD99906.1"/>
    <property type="molecule type" value="Genomic_DNA"/>
</dbReference>
<dbReference type="RefSeq" id="WP_011476164.1">
    <property type="nucleotide sequence ID" value="NC_007929.1"/>
</dbReference>
<dbReference type="RefSeq" id="YP_535989.1">
    <property type="nucleotide sequence ID" value="NC_007929.1"/>
</dbReference>
<dbReference type="SMR" id="Q1WT45"/>
<dbReference type="STRING" id="362948.LSL_1098"/>
<dbReference type="KEGG" id="lsl:LSL_1098"/>
<dbReference type="PATRIC" id="fig|362948.14.peg.1170"/>
<dbReference type="HOGENOM" id="CLU_014841_3_2_9"/>
<dbReference type="OrthoDB" id="9804933at2"/>
<dbReference type="Proteomes" id="UP000006559">
    <property type="component" value="Chromosome"/>
</dbReference>
<dbReference type="GO" id="GO:0005737">
    <property type="term" value="C:cytoplasm"/>
    <property type="evidence" value="ECO:0007669"/>
    <property type="project" value="UniProtKB-SubCell"/>
</dbReference>
<dbReference type="GO" id="GO:0009380">
    <property type="term" value="C:excinuclease repair complex"/>
    <property type="evidence" value="ECO:0007669"/>
    <property type="project" value="InterPro"/>
</dbReference>
<dbReference type="GO" id="GO:0003677">
    <property type="term" value="F:DNA binding"/>
    <property type="evidence" value="ECO:0007669"/>
    <property type="project" value="UniProtKB-UniRule"/>
</dbReference>
<dbReference type="GO" id="GO:0009381">
    <property type="term" value="F:excinuclease ABC activity"/>
    <property type="evidence" value="ECO:0007669"/>
    <property type="project" value="UniProtKB-UniRule"/>
</dbReference>
<dbReference type="GO" id="GO:0006289">
    <property type="term" value="P:nucleotide-excision repair"/>
    <property type="evidence" value="ECO:0007669"/>
    <property type="project" value="UniProtKB-UniRule"/>
</dbReference>
<dbReference type="GO" id="GO:0009432">
    <property type="term" value="P:SOS response"/>
    <property type="evidence" value="ECO:0007669"/>
    <property type="project" value="UniProtKB-UniRule"/>
</dbReference>
<dbReference type="CDD" id="cd10434">
    <property type="entry name" value="GIY-YIG_UvrC_Cho"/>
    <property type="match status" value="1"/>
</dbReference>
<dbReference type="FunFam" id="3.40.1440.10:FF:000001">
    <property type="entry name" value="UvrABC system protein C"/>
    <property type="match status" value="1"/>
</dbReference>
<dbReference type="FunFam" id="4.10.860.10:FF:000002">
    <property type="entry name" value="UvrABC system protein C"/>
    <property type="match status" value="1"/>
</dbReference>
<dbReference type="Gene3D" id="1.10.150.20">
    <property type="entry name" value="5' to 3' exonuclease, C-terminal subdomain"/>
    <property type="match status" value="1"/>
</dbReference>
<dbReference type="Gene3D" id="3.40.1440.10">
    <property type="entry name" value="GIY-YIG endonuclease"/>
    <property type="match status" value="1"/>
</dbReference>
<dbReference type="Gene3D" id="4.10.860.10">
    <property type="entry name" value="UVR domain"/>
    <property type="match status" value="1"/>
</dbReference>
<dbReference type="Gene3D" id="3.30.420.340">
    <property type="entry name" value="UvrC, RNAse H endonuclease domain"/>
    <property type="match status" value="1"/>
</dbReference>
<dbReference type="HAMAP" id="MF_00203">
    <property type="entry name" value="UvrC"/>
    <property type="match status" value="1"/>
</dbReference>
<dbReference type="InterPro" id="IPR000305">
    <property type="entry name" value="GIY-YIG_endonuc"/>
</dbReference>
<dbReference type="InterPro" id="IPR035901">
    <property type="entry name" value="GIY-YIG_endonuc_sf"/>
</dbReference>
<dbReference type="InterPro" id="IPR047296">
    <property type="entry name" value="GIY-YIG_UvrC_Cho"/>
</dbReference>
<dbReference type="InterPro" id="IPR010994">
    <property type="entry name" value="RuvA_2-like"/>
</dbReference>
<dbReference type="InterPro" id="IPR001943">
    <property type="entry name" value="UVR_dom"/>
</dbReference>
<dbReference type="InterPro" id="IPR036876">
    <property type="entry name" value="UVR_dom_sf"/>
</dbReference>
<dbReference type="InterPro" id="IPR050066">
    <property type="entry name" value="UvrABC_protein_C"/>
</dbReference>
<dbReference type="InterPro" id="IPR004791">
    <property type="entry name" value="UvrC"/>
</dbReference>
<dbReference type="InterPro" id="IPR001162">
    <property type="entry name" value="UvrC_RNase_H_dom"/>
</dbReference>
<dbReference type="InterPro" id="IPR038476">
    <property type="entry name" value="UvrC_RNase_H_dom_sf"/>
</dbReference>
<dbReference type="NCBIfam" id="TIGR00194">
    <property type="entry name" value="uvrC"/>
    <property type="match status" value="1"/>
</dbReference>
<dbReference type="PANTHER" id="PTHR30562:SF1">
    <property type="entry name" value="UVRABC SYSTEM PROTEIN C"/>
    <property type="match status" value="1"/>
</dbReference>
<dbReference type="PANTHER" id="PTHR30562">
    <property type="entry name" value="UVRC/OXIDOREDUCTASE"/>
    <property type="match status" value="1"/>
</dbReference>
<dbReference type="Pfam" id="PF01541">
    <property type="entry name" value="GIY-YIG"/>
    <property type="match status" value="1"/>
</dbReference>
<dbReference type="Pfam" id="PF14520">
    <property type="entry name" value="HHH_5"/>
    <property type="match status" value="1"/>
</dbReference>
<dbReference type="Pfam" id="PF02151">
    <property type="entry name" value="UVR"/>
    <property type="match status" value="1"/>
</dbReference>
<dbReference type="Pfam" id="PF22920">
    <property type="entry name" value="UvrC_RNaseH"/>
    <property type="match status" value="1"/>
</dbReference>
<dbReference type="Pfam" id="PF08459">
    <property type="entry name" value="UvrC_RNaseH_dom"/>
    <property type="match status" value="1"/>
</dbReference>
<dbReference type="SMART" id="SM00465">
    <property type="entry name" value="GIYc"/>
    <property type="match status" value="1"/>
</dbReference>
<dbReference type="SUPFAM" id="SSF46600">
    <property type="entry name" value="C-terminal UvrC-binding domain of UvrB"/>
    <property type="match status" value="1"/>
</dbReference>
<dbReference type="SUPFAM" id="SSF82771">
    <property type="entry name" value="GIY-YIG endonuclease"/>
    <property type="match status" value="1"/>
</dbReference>
<dbReference type="SUPFAM" id="SSF47781">
    <property type="entry name" value="RuvA domain 2-like"/>
    <property type="match status" value="1"/>
</dbReference>
<dbReference type="PROSITE" id="PS50164">
    <property type="entry name" value="GIY_YIG"/>
    <property type="match status" value="1"/>
</dbReference>
<dbReference type="PROSITE" id="PS50151">
    <property type="entry name" value="UVR"/>
    <property type="match status" value="1"/>
</dbReference>
<dbReference type="PROSITE" id="PS50165">
    <property type="entry name" value="UVRC"/>
    <property type="match status" value="1"/>
</dbReference>
<protein>
    <recommendedName>
        <fullName evidence="1">UvrABC system protein C</fullName>
        <shortName evidence="1">Protein UvrC</shortName>
    </recommendedName>
    <alternativeName>
        <fullName evidence="1">Excinuclease ABC subunit C</fullName>
    </alternativeName>
</protein>
<feature type="chain" id="PRO_0000264905" description="UvrABC system protein C">
    <location>
        <begin position="1"/>
        <end position="590"/>
    </location>
</feature>
<feature type="domain" description="GIY-YIG" evidence="1">
    <location>
        <begin position="15"/>
        <end position="92"/>
    </location>
</feature>
<feature type="domain" description="UVR" evidence="1">
    <location>
        <begin position="197"/>
        <end position="232"/>
    </location>
</feature>
<accession>Q1WT45</accession>
<reference key="1">
    <citation type="journal article" date="2006" name="Proc. Natl. Acad. Sci. U.S.A.">
        <title>Multireplicon genome architecture of Lactobacillus salivarius.</title>
        <authorList>
            <person name="Claesson M.J."/>
            <person name="Li Y."/>
            <person name="Leahy S."/>
            <person name="Canchaya C."/>
            <person name="van Pijkeren J.P."/>
            <person name="Cerdeno-Tarraga A.M."/>
            <person name="Parkhill J."/>
            <person name="Flynn S."/>
            <person name="O'Sullivan G.C."/>
            <person name="Collins J.K."/>
            <person name="Higgins D."/>
            <person name="Shanahan F."/>
            <person name="Fitzgerald G.F."/>
            <person name="van Sinderen D."/>
            <person name="O'Toole P.W."/>
        </authorList>
    </citation>
    <scope>NUCLEOTIDE SEQUENCE [LARGE SCALE GENOMIC DNA]</scope>
    <source>
        <strain>UCC118</strain>
    </source>
</reference>
<sequence length="590" mass="68051">MATQHIENKLKLLPDLPGCYMMKDINSRIIYVGKAKNLKNRVRSYFKSSHEGKTAKLVSEIRNFETIITSTDKEAFLLEITLIQKHKPYYNIKLKRGTGYPYIKITHEKDPQLKIVSQVKKDGGYYFGPYPNVYAATETLQLLQKVYPLRRCNGYQKRPCLYYHMGQCLGACFKEVPQSEYEKQIKKIKSFLNGNVSKIKKELEQKMETASENLEFERAAEIRDQIHYVEMTVEKQKIISNDNTPRDLFAFYMNKGWLSLQIFSIRQARLMKREKRLFPCIDTPEAELESFILQFYNQKNRILPKEILVPSGMDKETLSEILGIPVKTPQRGQKRDLLEMAQKNARLVLEEKFRLLELDERKTTGAMNEITDALGLPNGHRIEAFDHSHLQGEDLVSAMVCFIDGKPEKTEYRKYKLKNVDHADEAASTREVIYRRYSRLLKEKANLPDLILMDGASIQINAAVDVLHNQLGIDIPVAGMVKNDRHKTADLMTENDEKIGLDPKSEGFYLLQRIQDEVHRFAITFHRQVRSKNSLASRLERIQGVGPKTRIKLLRNYGSLKNISAASVEDLESLGISKKVAQTIKLSLKN</sequence>
<gene>
    <name evidence="1" type="primary">uvrC</name>
    <name type="ordered locus">LSL_1098</name>
</gene>
<evidence type="ECO:0000255" key="1">
    <source>
        <dbReference type="HAMAP-Rule" id="MF_00203"/>
    </source>
</evidence>
<organism>
    <name type="scientific">Ligilactobacillus salivarius (strain UCC118)</name>
    <name type="common">Lactobacillus salivarius</name>
    <dbReference type="NCBI Taxonomy" id="362948"/>
    <lineage>
        <taxon>Bacteria</taxon>
        <taxon>Bacillati</taxon>
        <taxon>Bacillota</taxon>
        <taxon>Bacilli</taxon>
        <taxon>Lactobacillales</taxon>
        <taxon>Lactobacillaceae</taxon>
        <taxon>Ligilactobacillus</taxon>
    </lineage>
</organism>